<accession>P0CB92</accession>
<accession>Q5RA56</accession>
<keyword id="KW-1015">Disulfide bond</keyword>
<keyword id="KW-0249">Electron transport</keyword>
<keyword id="KW-0472">Membrane</keyword>
<keyword id="KW-0496">Mitochondrion</keyword>
<keyword id="KW-0999">Mitochondrion inner membrane</keyword>
<keyword id="KW-0677">Repeat</keyword>
<keyword id="KW-0679">Respiratory chain</keyword>
<keyword id="KW-0813">Transport</keyword>
<comment type="function">
    <text evidence="1">Accessory subunit of the mitochondrial membrane respiratory chain NADH dehydrogenase (Complex I), that is believed not to be involved in catalysis. Complex I functions in the transfer of electrons from NADH to the respiratory chain. The immediate electron acceptor for the enzyme is believed to be ubiquinone.</text>
</comment>
<comment type="subunit">
    <text evidence="1">Complex I is composed of 45 different subunits.</text>
</comment>
<comment type="subcellular location">
    <subcellularLocation>
        <location evidence="1">Mitochondrion inner membrane</location>
        <topology evidence="1">Peripheral membrane protein</topology>
    </subcellularLocation>
    <subcellularLocation>
        <location evidence="1">Mitochondrion intermembrane space</location>
    </subcellularLocation>
    <subcellularLocation>
        <location evidence="1">Mitochondrion</location>
    </subcellularLocation>
</comment>
<comment type="domain">
    <text evidence="1">Contains four C-X9-C motifs that are predicted to form a helix-coil-helix structure, permitting the formation of intramolecular disulfide bonds.</text>
</comment>
<comment type="similarity">
    <text evidence="4">Belongs to the complex I NDUFA8 subunit family.</text>
</comment>
<name>NDUA8_PONPY</name>
<reference key="1">
    <citation type="journal article" date="2006" name="Gene">
        <title>Adaptive selection of mitochondrial complex I subunits during primate radiation.</title>
        <authorList>
            <person name="Mishmar D."/>
            <person name="Ruiz-Pesini E."/>
            <person name="Mondragon-Palomino M."/>
            <person name="Procaccio V."/>
            <person name="Gaut B."/>
            <person name="Wallace D.C."/>
        </authorList>
    </citation>
    <scope>NUCLEOTIDE SEQUENCE [MRNA]</scope>
</reference>
<protein>
    <recommendedName>
        <fullName>NADH dehydrogenase [ubiquinone] 1 alpha subcomplex subunit 8</fullName>
    </recommendedName>
    <alternativeName>
        <fullName>Complex I-19kD</fullName>
        <shortName>CI-19kD</shortName>
    </alternativeName>
    <alternativeName>
        <fullName>NADH-ubiquinone oxidoreductase 19 kDa subunit</fullName>
    </alternativeName>
</protein>
<sequence>MPGIVELPTLEELKVDEVKISSAVLKAAAHHYGAQCDKPNKEFMLCRWEEKDPRRCLEEGKLVNKCALDFFRQIKRHCAEPFTEYWTCIDYTGQQLFRHCRKQQAKFDECVLDKMGWVRPDLGELSKVTKVKTDRPLPENPYHSRPRPDPSPEIEGDLKPAIHGSRFYFWTK</sequence>
<feature type="chain" id="PRO_0000389264" description="NADH dehydrogenase [ubiquinone] 1 alpha subcomplex subunit 8">
    <location>
        <begin position="1"/>
        <end position="172"/>
    </location>
</feature>
<feature type="domain" description="CHCH 1" evidence="2">
    <location>
        <begin position="33"/>
        <end position="74"/>
    </location>
</feature>
<feature type="domain" description="CHCH 2" evidence="2">
    <location>
        <begin position="75"/>
        <end position="118"/>
    </location>
</feature>
<feature type="region of interest" description="Disordered" evidence="3">
    <location>
        <begin position="133"/>
        <end position="159"/>
    </location>
</feature>
<feature type="short sequence motif" description="Cx9C motif 1" evidence="2">
    <location>
        <begin position="36"/>
        <end position="46"/>
    </location>
</feature>
<feature type="short sequence motif" description="Cx9C motif 2" evidence="2">
    <location>
        <begin position="56"/>
        <end position="66"/>
    </location>
</feature>
<feature type="short sequence motif" description="Cx9C motif 3" evidence="2">
    <location>
        <begin position="78"/>
        <end position="88"/>
    </location>
</feature>
<feature type="short sequence motif" description="Cx9C motif 4" evidence="2">
    <location>
        <begin position="100"/>
        <end position="110"/>
    </location>
</feature>
<feature type="compositionally biased region" description="Basic and acidic residues" evidence="3">
    <location>
        <begin position="146"/>
        <end position="159"/>
    </location>
</feature>
<feature type="disulfide bond" evidence="2">
    <location>
        <begin position="36"/>
        <end position="66"/>
    </location>
</feature>
<feature type="disulfide bond" evidence="2">
    <location>
        <begin position="46"/>
        <end position="56"/>
    </location>
</feature>
<feature type="disulfide bond" evidence="2">
    <location>
        <begin position="78"/>
        <end position="110"/>
    </location>
</feature>
<feature type="disulfide bond" evidence="2">
    <location>
        <begin position="88"/>
        <end position="100"/>
    </location>
</feature>
<gene>
    <name type="primary">NDUFA8</name>
</gene>
<proteinExistence type="evidence at transcript level"/>
<organism>
    <name type="scientific">Pongo pygmaeus</name>
    <name type="common">Bornean orangutan</name>
    <dbReference type="NCBI Taxonomy" id="9600"/>
    <lineage>
        <taxon>Eukaryota</taxon>
        <taxon>Metazoa</taxon>
        <taxon>Chordata</taxon>
        <taxon>Craniata</taxon>
        <taxon>Vertebrata</taxon>
        <taxon>Euteleostomi</taxon>
        <taxon>Mammalia</taxon>
        <taxon>Eutheria</taxon>
        <taxon>Euarchontoglires</taxon>
        <taxon>Primates</taxon>
        <taxon>Haplorrhini</taxon>
        <taxon>Catarrhini</taxon>
        <taxon>Hominidae</taxon>
        <taxon>Pongo</taxon>
    </lineage>
</organism>
<evidence type="ECO:0000250" key="1">
    <source>
        <dbReference type="UniProtKB" id="P51970"/>
    </source>
</evidence>
<evidence type="ECO:0000255" key="2">
    <source>
        <dbReference type="PROSITE-ProRule" id="PRU01150"/>
    </source>
</evidence>
<evidence type="ECO:0000256" key="3">
    <source>
        <dbReference type="SAM" id="MobiDB-lite"/>
    </source>
</evidence>
<evidence type="ECO:0000305" key="4"/>
<dbReference type="EMBL" id="DQ885725">
    <property type="protein sequence ID" value="ABH12234.1"/>
    <property type="molecule type" value="mRNA"/>
</dbReference>
<dbReference type="RefSeq" id="XP_054357594.1">
    <property type="nucleotide sequence ID" value="XM_054501619.2"/>
</dbReference>
<dbReference type="SMR" id="P0CB92"/>
<dbReference type="GeneID" id="129044070"/>
<dbReference type="GO" id="GO:0005743">
    <property type="term" value="C:mitochondrial inner membrane"/>
    <property type="evidence" value="ECO:0007669"/>
    <property type="project" value="UniProtKB-SubCell"/>
</dbReference>
<dbReference type="GO" id="GO:0005758">
    <property type="term" value="C:mitochondrial intermembrane space"/>
    <property type="evidence" value="ECO:0007669"/>
    <property type="project" value="UniProtKB-SubCell"/>
</dbReference>
<dbReference type="GO" id="GO:0005739">
    <property type="term" value="C:mitochondrion"/>
    <property type="evidence" value="ECO:0000250"/>
    <property type="project" value="UniProtKB"/>
</dbReference>
<dbReference type="GO" id="GO:0045271">
    <property type="term" value="C:respiratory chain complex I"/>
    <property type="evidence" value="ECO:0000250"/>
    <property type="project" value="UniProtKB"/>
</dbReference>
<dbReference type="GO" id="GO:0006120">
    <property type="term" value="P:mitochondrial electron transport, NADH to ubiquinone"/>
    <property type="evidence" value="ECO:0007669"/>
    <property type="project" value="InterPro"/>
</dbReference>
<dbReference type="InterPro" id="IPR010625">
    <property type="entry name" value="CHCH"/>
</dbReference>
<dbReference type="InterPro" id="IPR016680">
    <property type="entry name" value="NDUFA8"/>
</dbReference>
<dbReference type="PANTHER" id="PTHR13344:SF0">
    <property type="entry name" value="NADH DEHYDROGENASE [UBIQUINONE] 1 ALPHA SUBCOMPLEX SUBUNIT 8"/>
    <property type="match status" value="1"/>
</dbReference>
<dbReference type="PANTHER" id="PTHR13344">
    <property type="entry name" value="NADH-UBIQUINONE OXIDOREDUCTASE"/>
    <property type="match status" value="1"/>
</dbReference>
<dbReference type="Pfam" id="PF06747">
    <property type="entry name" value="CHCH"/>
    <property type="match status" value="1"/>
</dbReference>
<dbReference type="PIRSF" id="PIRSF017016">
    <property type="entry name" value="NDUA8"/>
    <property type="match status" value="1"/>
</dbReference>
<dbReference type="PROSITE" id="PS51808">
    <property type="entry name" value="CHCH"/>
    <property type="match status" value="2"/>
</dbReference>